<gene>
    <name type="primary">yjfP</name>
    <name type="ordered locus">b4190</name>
    <name type="ordered locus">JW4148</name>
</gene>
<reference key="1">
    <citation type="journal article" date="1995" name="Nucleic Acids Res.">
        <title>Analysis of the Escherichia coli genome VI: DNA sequence of the region from 92.8 through 100 minutes.</title>
        <authorList>
            <person name="Burland V.D."/>
            <person name="Plunkett G. III"/>
            <person name="Sofia H.J."/>
            <person name="Daniels D.L."/>
            <person name="Blattner F.R."/>
        </authorList>
    </citation>
    <scope>NUCLEOTIDE SEQUENCE [LARGE SCALE GENOMIC DNA]</scope>
    <source>
        <strain>K12 / MG1655 / ATCC 47076</strain>
    </source>
</reference>
<reference key="2">
    <citation type="journal article" date="1997" name="Science">
        <title>The complete genome sequence of Escherichia coli K-12.</title>
        <authorList>
            <person name="Blattner F.R."/>
            <person name="Plunkett G. III"/>
            <person name="Bloch C.A."/>
            <person name="Perna N.T."/>
            <person name="Burland V."/>
            <person name="Riley M."/>
            <person name="Collado-Vides J."/>
            <person name="Glasner J.D."/>
            <person name="Rode C.K."/>
            <person name="Mayhew G.F."/>
            <person name="Gregor J."/>
            <person name="Davis N.W."/>
            <person name="Kirkpatrick H.A."/>
            <person name="Goeden M.A."/>
            <person name="Rose D.J."/>
            <person name="Mau B."/>
            <person name="Shao Y."/>
        </authorList>
    </citation>
    <scope>NUCLEOTIDE SEQUENCE [LARGE SCALE GENOMIC DNA]</scope>
    <source>
        <strain>K12 / MG1655 / ATCC 47076</strain>
    </source>
</reference>
<reference key="3">
    <citation type="journal article" date="2006" name="Mol. Syst. Biol.">
        <title>Highly accurate genome sequences of Escherichia coli K-12 strains MG1655 and W3110.</title>
        <authorList>
            <person name="Hayashi K."/>
            <person name="Morooka N."/>
            <person name="Yamamoto Y."/>
            <person name="Fujita K."/>
            <person name="Isono K."/>
            <person name="Choi S."/>
            <person name="Ohtsubo E."/>
            <person name="Baba T."/>
            <person name="Wanner B.L."/>
            <person name="Mori H."/>
            <person name="Horiuchi T."/>
        </authorList>
    </citation>
    <scope>NUCLEOTIDE SEQUENCE [LARGE SCALE GENOMIC DNA]</scope>
    <source>
        <strain>K12 / W3110 / ATCC 27325 / DSM 5911</strain>
    </source>
</reference>
<reference key="4">
    <citation type="journal article" date="2005" name="FEMS Microbiol. Rev.">
        <title>Enzyme genomics: application of general enzymatic screens to discover new enzymes.</title>
        <authorList>
            <person name="Kuznetsova E."/>
            <person name="Proudfoot M."/>
            <person name="Sanders S.A."/>
            <person name="Reinking J."/>
            <person name="Savchenko A."/>
            <person name="Arrowsmith C.H."/>
            <person name="Edwards A.M."/>
            <person name="Yakunin A.F."/>
        </authorList>
    </citation>
    <scope>FUNCTION</scope>
</reference>
<dbReference type="EC" id="3.1.-.-"/>
<dbReference type="EMBL" id="U14003">
    <property type="protein sequence ID" value="AAA97086.1"/>
    <property type="molecule type" value="Genomic_DNA"/>
</dbReference>
<dbReference type="EMBL" id="U00096">
    <property type="protein sequence ID" value="AAC77147.1"/>
    <property type="molecule type" value="Genomic_DNA"/>
</dbReference>
<dbReference type="EMBL" id="AP009048">
    <property type="protein sequence ID" value="BAE78191.1"/>
    <property type="molecule type" value="Genomic_DNA"/>
</dbReference>
<dbReference type="PIR" id="S56415">
    <property type="entry name" value="S56415"/>
</dbReference>
<dbReference type="RefSeq" id="NP_418611.1">
    <property type="nucleotide sequence ID" value="NC_000913.3"/>
</dbReference>
<dbReference type="RefSeq" id="WP_000569707.1">
    <property type="nucleotide sequence ID" value="NZ_LN832404.1"/>
</dbReference>
<dbReference type="SMR" id="P39298"/>
<dbReference type="BioGRID" id="4262710">
    <property type="interactions" value="9"/>
</dbReference>
<dbReference type="FunCoup" id="P39298">
    <property type="interactions" value="119"/>
</dbReference>
<dbReference type="IntAct" id="P39298">
    <property type="interactions" value="1"/>
</dbReference>
<dbReference type="STRING" id="511145.b4190"/>
<dbReference type="ESTHER" id="ecoli-yjfp">
    <property type="family name" value="yjfP_esterase-like"/>
</dbReference>
<dbReference type="MEROPS" id="S09.A46"/>
<dbReference type="jPOST" id="P39298"/>
<dbReference type="PaxDb" id="511145-b4190"/>
<dbReference type="EnsemblBacteria" id="AAC77147">
    <property type="protein sequence ID" value="AAC77147"/>
    <property type="gene ID" value="b4190"/>
</dbReference>
<dbReference type="GeneID" id="948707"/>
<dbReference type="KEGG" id="ecj:JW4148"/>
<dbReference type="KEGG" id="eco:b4190"/>
<dbReference type="KEGG" id="ecoc:C3026_22635"/>
<dbReference type="PATRIC" id="fig|1411691.4.peg.2511"/>
<dbReference type="EchoBASE" id="EB2383"/>
<dbReference type="eggNOG" id="COG1073">
    <property type="taxonomic scope" value="Bacteria"/>
</dbReference>
<dbReference type="HOGENOM" id="CLU_094948_1_0_6"/>
<dbReference type="InParanoid" id="P39298"/>
<dbReference type="OMA" id="PLFIWHG"/>
<dbReference type="OrthoDB" id="31158at2"/>
<dbReference type="PhylomeDB" id="P39298"/>
<dbReference type="BioCyc" id="EcoCyc:G7853-MONOMER"/>
<dbReference type="BioCyc" id="MetaCyc:G7853-MONOMER"/>
<dbReference type="BRENDA" id="3.1.2.2">
    <property type="organism ID" value="2026"/>
</dbReference>
<dbReference type="PRO" id="PR:P39298"/>
<dbReference type="Proteomes" id="UP000000625">
    <property type="component" value="Chromosome"/>
</dbReference>
<dbReference type="GO" id="GO:0016787">
    <property type="term" value="F:hydrolase activity"/>
    <property type="evidence" value="ECO:0000314"/>
    <property type="project" value="EcoCyc"/>
</dbReference>
<dbReference type="GO" id="GO:0042803">
    <property type="term" value="F:protein homodimerization activity"/>
    <property type="evidence" value="ECO:0000314"/>
    <property type="project" value="EcoCyc"/>
</dbReference>
<dbReference type="GO" id="GO:0008236">
    <property type="term" value="F:serine-type peptidase activity"/>
    <property type="evidence" value="ECO:0007669"/>
    <property type="project" value="InterPro"/>
</dbReference>
<dbReference type="GO" id="GO:0034338">
    <property type="term" value="F:short-chain carboxylesterase activity"/>
    <property type="evidence" value="ECO:0000314"/>
    <property type="project" value="EcoCyc"/>
</dbReference>
<dbReference type="GO" id="GO:0006508">
    <property type="term" value="P:proteolysis"/>
    <property type="evidence" value="ECO:0007669"/>
    <property type="project" value="InterPro"/>
</dbReference>
<dbReference type="FunFam" id="3.40.50.1820:FF:000189">
    <property type="entry name" value="Esterase yjfP"/>
    <property type="match status" value="1"/>
</dbReference>
<dbReference type="Gene3D" id="3.40.50.1820">
    <property type="entry name" value="alpha/beta hydrolase"/>
    <property type="match status" value="1"/>
</dbReference>
<dbReference type="InterPro" id="IPR029058">
    <property type="entry name" value="AB_hydrolase_fold"/>
</dbReference>
<dbReference type="InterPro" id="IPR050261">
    <property type="entry name" value="FrsA_esterase"/>
</dbReference>
<dbReference type="InterPro" id="IPR001375">
    <property type="entry name" value="Peptidase_S9_cat"/>
</dbReference>
<dbReference type="NCBIfam" id="NF007857">
    <property type="entry name" value="PRK10566.1"/>
    <property type="match status" value="1"/>
</dbReference>
<dbReference type="PANTHER" id="PTHR22946">
    <property type="entry name" value="DIENELACTONE HYDROLASE DOMAIN-CONTAINING PROTEIN-RELATED"/>
    <property type="match status" value="1"/>
</dbReference>
<dbReference type="PANTHER" id="PTHR22946:SF9">
    <property type="entry name" value="POLYKETIDE TRANSFERASE AF380"/>
    <property type="match status" value="1"/>
</dbReference>
<dbReference type="Pfam" id="PF00326">
    <property type="entry name" value="Peptidase_S9"/>
    <property type="match status" value="1"/>
</dbReference>
<dbReference type="SUPFAM" id="SSF53474">
    <property type="entry name" value="alpha/beta-Hydrolases"/>
    <property type="match status" value="1"/>
</dbReference>
<name>YJFP_ECOLI</name>
<evidence type="ECO:0000269" key="1">
    <source>
    </source>
</evidence>
<organism>
    <name type="scientific">Escherichia coli (strain K12)</name>
    <dbReference type="NCBI Taxonomy" id="83333"/>
    <lineage>
        <taxon>Bacteria</taxon>
        <taxon>Pseudomonadati</taxon>
        <taxon>Pseudomonadota</taxon>
        <taxon>Gammaproteobacteria</taxon>
        <taxon>Enterobacterales</taxon>
        <taxon>Enterobacteriaceae</taxon>
        <taxon>Escherichia</taxon>
    </lineage>
</organism>
<keyword id="KW-0378">Hydrolase</keyword>
<keyword id="KW-1185">Reference proteome</keyword>
<feature type="chain" id="PRO_0000066272" description="Esterase YjfP">
    <location>
        <begin position="1"/>
        <end position="249"/>
    </location>
</feature>
<protein>
    <recommendedName>
        <fullName>Esterase YjfP</fullName>
        <ecNumber>3.1.-.-</ecNumber>
    </recommendedName>
</protein>
<sequence>MIEIESRELADIPVLHAYPVGQKDTPLPCVIFYHGFTSSSLVYSYFAVALAQAGLRVIMPDAPDHGSRFSGDAARRLNQFWQILLQSMQEFTTLRAAIAEENWLLDDRLAVGGASMGAMTALGITARHPTVRCTASMMGSGYFTSLARSLFPPLIPETAAQQNEFNNIVAPLAEWEATNHLEQLSDRPLLLWHGLDDDVVPADESLRLQQALSETGRDKLLTCSWQPGVRHRITPEALDAAVTFFRQHL</sequence>
<proteinExistence type="predicted"/>
<accession>P39298</accession>
<accession>Q2M6B5</accession>
<comment type="function">
    <text evidence="1">Displays esterase activity toward palmitoyl-CoA and pNP-butyrate.</text>
</comment>